<accession>A7FZ44</accession>
<feature type="chain" id="PRO_1000007684" description="DNA-directed RNA polymerase subunit alpha">
    <location>
        <begin position="1"/>
        <end position="315"/>
    </location>
</feature>
<feature type="region of interest" description="Alpha N-terminal domain (alpha-NTD)" evidence="1">
    <location>
        <begin position="1"/>
        <end position="228"/>
    </location>
</feature>
<feature type="region of interest" description="Alpha C-terminal domain (alpha-CTD)" evidence="1">
    <location>
        <begin position="245"/>
        <end position="315"/>
    </location>
</feature>
<reference key="1">
    <citation type="journal article" date="2007" name="PLoS ONE">
        <title>Analysis of the neurotoxin complex genes in Clostridium botulinum A1-A4 and B1 strains: BoNT/A3, /Ba4 and /B1 clusters are located within plasmids.</title>
        <authorList>
            <person name="Smith T.J."/>
            <person name="Hill K.K."/>
            <person name="Foley B.T."/>
            <person name="Detter J.C."/>
            <person name="Munk A.C."/>
            <person name="Bruce D.C."/>
            <person name="Doggett N.A."/>
            <person name="Smith L.A."/>
            <person name="Marks J.D."/>
            <person name="Xie G."/>
            <person name="Brettin T.S."/>
        </authorList>
    </citation>
    <scope>NUCLEOTIDE SEQUENCE [LARGE SCALE GENOMIC DNA]</scope>
    <source>
        <strain>ATCC 19397 / Type A</strain>
    </source>
</reference>
<comment type="function">
    <text evidence="1">DNA-dependent RNA polymerase catalyzes the transcription of DNA into RNA using the four ribonucleoside triphosphates as substrates.</text>
</comment>
<comment type="catalytic activity">
    <reaction evidence="1">
        <text>RNA(n) + a ribonucleoside 5'-triphosphate = RNA(n+1) + diphosphate</text>
        <dbReference type="Rhea" id="RHEA:21248"/>
        <dbReference type="Rhea" id="RHEA-COMP:14527"/>
        <dbReference type="Rhea" id="RHEA-COMP:17342"/>
        <dbReference type="ChEBI" id="CHEBI:33019"/>
        <dbReference type="ChEBI" id="CHEBI:61557"/>
        <dbReference type="ChEBI" id="CHEBI:140395"/>
        <dbReference type="EC" id="2.7.7.6"/>
    </reaction>
</comment>
<comment type="subunit">
    <text evidence="1">Homodimer. The RNAP catalytic core consists of 2 alpha, 1 beta, 1 beta' and 1 omega subunit. When a sigma factor is associated with the core the holoenzyme is formed, which can initiate transcription.</text>
</comment>
<comment type="domain">
    <text evidence="1">The N-terminal domain is essential for RNAP assembly and basal transcription, whereas the C-terminal domain is involved in interaction with transcriptional regulators and with upstream promoter elements.</text>
</comment>
<comment type="similarity">
    <text evidence="1">Belongs to the RNA polymerase alpha chain family.</text>
</comment>
<organism>
    <name type="scientific">Clostridium botulinum (strain ATCC 19397 / Type A)</name>
    <dbReference type="NCBI Taxonomy" id="441770"/>
    <lineage>
        <taxon>Bacteria</taxon>
        <taxon>Bacillati</taxon>
        <taxon>Bacillota</taxon>
        <taxon>Clostridia</taxon>
        <taxon>Eubacteriales</taxon>
        <taxon>Clostridiaceae</taxon>
        <taxon>Clostridium</taxon>
    </lineage>
</organism>
<name>RPOA_CLOB1</name>
<evidence type="ECO:0000255" key="1">
    <source>
        <dbReference type="HAMAP-Rule" id="MF_00059"/>
    </source>
</evidence>
<sequence length="315" mass="35397">MLEIEKPKIECVENAEDGSYGKFVIEPLERGYGITLGNALRRILLSSLPGVAADHIKIDSVLHEFSTVQGVKEDVTELILNIKCLALTMNGEGPKTIYIDEVGPKEVTAADIKTDGDVEVINKDLHIATLDENGKMYMEINVNRGRGYVTQNKNKTKDMPIGSIAVDSIYTPVKRVNFSVENTRVGQITDYDKLTIEVWTNGTIRPEEAVSLSAKILIEHFKLFMTLTDHADDMEIMVEKEEDKKEKVLEMTIEELDLSVRSYNCLKRAGINTVQELCERSMDDMMKVRNLGKKSLEEVEQKLEALGLGLRKSED</sequence>
<gene>
    <name evidence="1" type="primary">rpoA</name>
    <name type="ordered locus">CLB_3508</name>
</gene>
<keyword id="KW-0240">DNA-directed RNA polymerase</keyword>
<keyword id="KW-0548">Nucleotidyltransferase</keyword>
<keyword id="KW-0804">Transcription</keyword>
<keyword id="KW-0808">Transferase</keyword>
<dbReference type="EC" id="2.7.7.6" evidence="1"/>
<dbReference type="EMBL" id="CP000726">
    <property type="protein sequence ID" value="ABS33893.1"/>
    <property type="molecule type" value="Genomic_DNA"/>
</dbReference>
<dbReference type="RefSeq" id="WP_003357472.1">
    <property type="nucleotide sequence ID" value="NC_009697.1"/>
</dbReference>
<dbReference type="SMR" id="A7FZ44"/>
<dbReference type="KEGG" id="cba:CLB_3508"/>
<dbReference type="HOGENOM" id="CLU_053084_0_1_9"/>
<dbReference type="GO" id="GO:0005737">
    <property type="term" value="C:cytoplasm"/>
    <property type="evidence" value="ECO:0007669"/>
    <property type="project" value="UniProtKB-ARBA"/>
</dbReference>
<dbReference type="GO" id="GO:0000428">
    <property type="term" value="C:DNA-directed RNA polymerase complex"/>
    <property type="evidence" value="ECO:0007669"/>
    <property type="project" value="UniProtKB-KW"/>
</dbReference>
<dbReference type="GO" id="GO:0003677">
    <property type="term" value="F:DNA binding"/>
    <property type="evidence" value="ECO:0007669"/>
    <property type="project" value="UniProtKB-UniRule"/>
</dbReference>
<dbReference type="GO" id="GO:0003899">
    <property type="term" value="F:DNA-directed RNA polymerase activity"/>
    <property type="evidence" value="ECO:0007669"/>
    <property type="project" value="UniProtKB-UniRule"/>
</dbReference>
<dbReference type="GO" id="GO:0046983">
    <property type="term" value="F:protein dimerization activity"/>
    <property type="evidence" value="ECO:0007669"/>
    <property type="project" value="InterPro"/>
</dbReference>
<dbReference type="GO" id="GO:0006351">
    <property type="term" value="P:DNA-templated transcription"/>
    <property type="evidence" value="ECO:0007669"/>
    <property type="project" value="UniProtKB-UniRule"/>
</dbReference>
<dbReference type="CDD" id="cd06928">
    <property type="entry name" value="RNAP_alpha_NTD"/>
    <property type="match status" value="1"/>
</dbReference>
<dbReference type="FunFam" id="1.10.150.20:FF:000001">
    <property type="entry name" value="DNA-directed RNA polymerase subunit alpha"/>
    <property type="match status" value="1"/>
</dbReference>
<dbReference type="FunFam" id="2.170.120.12:FF:000001">
    <property type="entry name" value="DNA-directed RNA polymerase subunit alpha"/>
    <property type="match status" value="1"/>
</dbReference>
<dbReference type="Gene3D" id="1.10.150.20">
    <property type="entry name" value="5' to 3' exonuclease, C-terminal subdomain"/>
    <property type="match status" value="1"/>
</dbReference>
<dbReference type="Gene3D" id="2.170.120.12">
    <property type="entry name" value="DNA-directed RNA polymerase, insert domain"/>
    <property type="match status" value="1"/>
</dbReference>
<dbReference type="Gene3D" id="3.30.1360.10">
    <property type="entry name" value="RNA polymerase, RBP11-like subunit"/>
    <property type="match status" value="1"/>
</dbReference>
<dbReference type="HAMAP" id="MF_00059">
    <property type="entry name" value="RNApol_bact_RpoA"/>
    <property type="match status" value="1"/>
</dbReference>
<dbReference type="InterPro" id="IPR011262">
    <property type="entry name" value="DNA-dir_RNA_pol_insert"/>
</dbReference>
<dbReference type="InterPro" id="IPR011263">
    <property type="entry name" value="DNA-dir_RNA_pol_RpoA/D/Rpb3"/>
</dbReference>
<dbReference type="InterPro" id="IPR011773">
    <property type="entry name" value="DNA-dir_RpoA"/>
</dbReference>
<dbReference type="InterPro" id="IPR036603">
    <property type="entry name" value="RBP11-like"/>
</dbReference>
<dbReference type="InterPro" id="IPR011260">
    <property type="entry name" value="RNAP_asu_C"/>
</dbReference>
<dbReference type="InterPro" id="IPR036643">
    <property type="entry name" value="RNApol_insert_sf"/>
</dbReference>
<dbReference type="NCBIfam" id="NF003513">
    <property type="entry name" value="PRK05182.1-2"/>
    <property type="match status" value="1"/>
</dbReference>
<dbReference type="NCBIfam" id="NF003515">
    <property type="entry name" value="PRK05182.2-1"/>
    <property type="match status" value="1"/>
</dbReference>
<dbReference type="NCBIfam" id="NF003516">
    <property type="entry name" value="PRK05182.2-2"/>
    <property type="match status" value="1"/>
</dbReference>
<dbReference type="NCBIfam" id="NF003519">
    <property type="entry name" value="PRK05182.2-5"/>
    <property type="match status" value="1"/>
</dbReference>
<dbReference type="NCBIfam" id="TIGR02027">
    <property type="entry name" value="rpoA"/>
    <property type="match status" value="1"/>
</dbReference>
<dbReference type="Pfam" id="PF01000">
    <property type="entry name" value="RNA_pol_A_bac"/>
    <property type="match status" value="1"/>
</dbReference>
<dbReference type="Pfam" id="PF03118">
    <property type="entry name" value="RNA_pol_A_CTD"/>
    <property type="match status" value="1"/>
</dbReference>
<dbReference type="Pfam" id="PF01193">
    <property type="entry name" value="RNA_pol_L"/>
    <property type="match status" value="1"/>
</dbReference>
<dbReference type="SMART" id="SM00662">
    <property type="entry name" value="RPOLD"/>
    <property type="match status" value="1"/>
</dbReference>
<dbReference type="SUPFAM" id="SSF47789">
    <property type="entry name" value="C-terminal domain of RNA polymerase alpha subunit"/>
    <property type="match status" value="1"/>
</dbReference>
<dbReference type="SUPFAM" id="SSF56553">
    <property type="entry name" value="Insert subdomain of RNA polymerase alpha subunit"/>
    <property type="match status" value="1"/>
</dbReference>
<dbReference type="SUPFAM" id="SSF55257">
    <property type="entry name" value="RBP11-like subunits of RNA polymerase"/>
    <property type="match status" value="1"/>
</dbReference>
<protein>
    <recommendedName>
        <fullName evidence="1">DNA-directed RNA polymerase subunit alpha</fullName>
        <shortName evidence="1">RNAP subunit alpha</shortName>
        <ecNumber evidence="1">2.7.7.6</ecNumber>
    </recommendedName>
    <alternativeName>
        <fullName evidence="1">RNA polymerase subunit alpha</fullName>
    </alternativeName>
    <alternativeName>
        <fullName evidence="1">Transcriptase subunit alpha</fullName>
    </alternativeName>
</protein>
<proteinExistence type="inferred from homology"/>